<feature type="chain" id="PRO_0000299553" description="Zinc finger protein 532">
    <location>
        <begin position="1"/>
        <end position="1036"/>
    </location>
</feature>
<feature type="zinc finger region" description="C2H2-type 1; degenerate" evidence="2">
    <location>
        <begin position="615"/>
        <end position="634"/>
    </location>
</feature>
<feature type="zinc finger region" description="C2H2-type 2; degenerate" evidence="2">
    <location>
        <begin position="751"/>
        <end position="775"/>
    </location>
</feature>
<feature type="zinc finger region" description="C2H2-type 3" evidence="2">
    <location>
        <begin position="784"/>
        <end position="807"/>
    </location>
</feature>
<feature type="zinc finger region" description="C2H2-type 4; degenerate" evidence="2">
    <location>
        <begin position="814"/>
        <end position="840"/>
    </location>
</feature>
<feature type="zinc finger region" description="C2H2-type 5" evidence="2">
    <location>
        <begin position="938"/>
        <end position="961"/>
    </location>
</feature>
<feature type="zinc finger region" description="C2H2-type 6" evidence="2">
    <location>
        <begin position="999"/>
        <end position="1021"/>
    </location>
</feature>
<feature type="region of interest" description="Disordered" evidence="3">
    <location>
        <begin position="26"/>
        <end position="92"/>
    </location>
</feature>
<feature type="region of interest" description="Disordered" evidence="3">
    <location>
        <begin position="106"/>
        <end position="206"/>
    </location>
</feature>
<feature type="region of interest" description="Disordered" evidence="3">
    <location>
        <begin position="220"/>
        <end position="265"/>
    </location>
</feature>
<feature type="region of interest" description="Disordered" evidence="3">
    <location>
        <begin position="281"/>
        <end position="362"/>
    </location>
</feature>
<feature type="region of interest" description="Disordered" evidence="3">
    <location>
        <begin position="847"/>
        <end position="877"/>
    </location>
</feature>
<feature type="region of interest" description="Disordered" evidence="3">
    <location>
        <begin position="966"/>
        <end position="1000"/>
    </location>
</feature>
<feature type="compositionally biased region" description="Basic and acidic residues" evidence="3">
    <location>
        <begin position="32"/>
        <end position="52"/>
    </location>
</feature>
<feature type="compositionally biased region" description="Acidic residues" evidence="3">
    <location>
        <begin position="136"/>
        <end position="151"/>
    </location>
</feature>
<feature type="compositionally biased region" description="Polar residues" evidence="3">
    <location>
        <begin position="182"/>
        <end position="193"/>
    </location>
</feature>
<feature type="compositionally biased region" description="Basic and acidic residues" evidence="3">
    <location>
        <begin position="194"/>
        <end position="205"/>
    </location>
</feature>
<feature type="compositionally biased region" description="Basic and acidic residues" evidence="3">
    <location>
        <begin position="220"/>
        <end position="249"/>
    </location>
</feature>
<feature type="compositionally biased region" description="Low complexity" evidence="3">
    <location>
        <begin position="253"/>
        <end position="265"/>
    </location>
</feature>
<feature type="compositionally biased region" description="Basic and acidic residues" evidence="3">
    <location>
        <begin position="302"/>
        <end position="314"/>
    </location>
</feature>
<feature type="compositionally biased region" description="Low complexity" evidence="3">
    <location>
        <begin position="336"/>
        <end position="353"/>
    </location>
</feature>
<feature type="compositionally biased region" description="Acidic residues" evidence="3">
    <location>
        <begin position="852"/>
        <end position="867"/>
    </location>
</feature>
<feature type="compositionally biased region" description="Basic and acidic residues" evidence="3">
    <location>
        <begin position="868"/>
        <end position="877"/>
    </location>
</feature>
<feature type="modified residue" description="Phosphoserine" evidence="1">
    <location>
        <position position="130"/>
    </location>
</feature>
<feature type="modified residue" description="Phosphoserine" evidence="1">
    <location>
        <position position="133"/>
    </location>
</feature>
<feature type="modified residue" description="Phosphoserine" evidence="1">
    <location>
        <position position="134"/>
    </location>
</feature>
<feature type="modified residue" description="N6-acetyllysine" evidence="7">
    <location>
        <position position="175"/>
    </location>
</feature>
<feature type="modified residue" description="Phosphoserine" evidence="1">
    <location>
        <position position="306"/>
    </location>
</feature>
<feature type="modified residue" description="Phosphoserine" evidence="6">
    <location>
        <position position="313"/>
    </location>
</feature>
<feature type="modified residue" description="Phosphoserine" evidence="1">
    <location>
        <position position="433"/>
    </location>
</feature>
<feature type="modified residue" description="Phosphoserine" evidence="1">
    <location>
        <position position="875"/>
    </location>
</feature>
<feature type="cross-link" description="Glycyl lysine isopeptide (Lys-Gly) (interchain with G-Cter in SUMO2)" evidence="1">
    <location>
        <position position="458"/>
    </location>
</feature>
<feature type="cross-link" description="Glycyl lysine isopeptide (Lys-Gly) (interchain with G-Cter in SUMO2)" evidence="1">
    <location>
        <position position="515"/>
    </location>
</feature>
<feature type="cross-link" description="Glycyl lysine isopeptide (Lys-Gly) (interchain with G-Cter in SUMO2)" evidence="1">
    <location>
        <position position="879"/>
    </location>
</feature>
<feature type="cross-link" description="Glycyl lysine isopeptide (Lys-Gly) (interchain with G-Cter in SUMO2)" evidence="1">
    <location>
        <position position="902"/>
    </location>
</feature>
<feature type="splice variant" id="VSP_027745" description="In isoform 2." evidence="4">
    <original>QMKKHPCRQCDKSFSSSHSLCRHNRIKHKGIRKVYACSHCPDSRRTFTKRLMLERHIQLMHGIKDPDVKELSDDAGDVTNDEEEEAEIKEDAKVPSPKRKLEEPVLEFRPPRGAITQPLKKLKINVFKVHKCAVCGFTTENLLQFHEHIPQHRSDGSSHQCRECGLCYTSHGSLARHLFIVHKLKEPQPVSKQNGAGEDSQQENKPSPEDEAAEGAASDRKCKVCAKTFETEAALNTHMRTHGMAFIKSKRMSSAEK</original>
    <variation>KTCTVCQMLLPNQCSYASHQRIHQHKSPYTCPECGAICRSVHFQNHITKNCLHYTRRVGFRCVHCNVVYSDVAALKSHIQGSHCEVFYKCPICPMAFKSAPSTHSHAYTQHPGVKIGEPNK</variation>
    <location>
        <begin position="780"/>
        <end position="1036"/>
    </location>
</feature>
<name>ZN532_MOUSE</name>
<protein>
    <recommendedName>
        <fullName>Zinc finger protein 532</fullName>
    </recommendedName>
</protein>
<sequence length="1036" mass="110949">MTMGDMKTPDFDDLLAAFDIPDMVDPKAAIESGHDDHESHIKQNAHVDDDSHTPSSSDVGVSVIVKNVRNIDSSEGVEKDGHNPTGNGLHNGFLTASSLDSYGKDGAKSLKGDTPASEVTLKDPAFSQFSPISSAEEFEDDEKIEVDDPPDKEEARAGFRSNVLTGSAPQQDFDKLKALGGENSSKTGVSTSGHTDKNKVKREAESNSITLSVYEPFKVRKAEDKLKENSEKMLESRVLDGKPSSEKSDSGIAAAASSKTKPSSKLSSCIAAIAALSAKKAASDSCKEPVANSREASPLPKEVNDSPKAADKSPESQNLIDGTKKASLKPSDSPRSVSSENSSKGSPSSPVGSTPAIPKVRIKTIKTSSGEIKRTVTRVLPEVDLDSGKKPSEQAASVMASVTSLLSSSASATVLSSPPRAPLQTAMVTSAVSSAELTPKQVTIKPVATAFLPVSAVKTAGSQVINLKLANNTTVKATVISAASVQSASSAIIKAANAIQQQTVVVPASSLANAKLVPKTVHLANLNLLPQGAQATSELRQVLTKPQQQIKQAIINAAASQPPKKVSRVQVVSSLQSSVVEAFNKVLSSVNPVPVYTPNLSPPANAGITLPMRGYKCLECGDAFALEKSLSQHYDRRSVRIEVTCNHCTKNLVFYNKCSLLSHARGHKEKGVVMQCSHLILKPVPADQMIVPPSSNTAASTLQSSVGAATHTVPKVQPGIAGAVISAPASTPMSPAMPLDEDPSKLCRHSLKCLECNEVFQDEPSLATHFQHAADTSGQQMKKHPCRQCDKSFSSSHSLCRHNRIKHKGIRKVYACSHCPDSRRTFTKRLMLERHIQLMHGIKDPDVKELSDDAGDVTNDEEEEAEIKEDAKVPSPKRKLEEPVLEFRPPRGAITQPLKKLKINVFKVHKCAVCGFTTENLLQFHEHIPQHRSDGSSHQCRECGLCYTSHGSLARHLFIVHKLKEPQPVSKQNGAGEDSQQENKPSPEDEAAEGAASDRKCKVCAKTFETEAALNTHMRTHGMAFIKSKRMSSAEK</sequence>
<gene>
    <name type="primary">Znf532</name>
    <name type="synonym">Kiaa1629</name>
    <name type="synonym">Zfp532</name>
</gene>
<evidence type="ECO:0000250" key="1">
    <source>
        <dbReference type="UniProtKB" id="Q9HCE3"/>
    </source>
</evidence>
<evidence type="ECO:0000255" key="2">
    <source>
        <dbReference type="PROSITE-ProRule" id="PRU00042"/>
    </source>
</evidence>
<evidence type="ECO:0000256" key="3">
    <source>
        <dbReference type="SAM" id="MobiDB-lite"/>
    </source>
</evidence>
<evidence type="ECO:0000303" key="4">
    <source>
    </source>
</evidence>
<evidence type="ECO:0000305" key="5"/>
<evidence type="ECO:0007744" key="6">
    <source>
    </source>
</evidence>
<evidence type="ECO:0007744" key="7">
    <source>
    </source>
</evidence>
<reference key="1">
    <citation type="journal article" date="2004" name="Genome Res.">
        <title>The status, quality, and expansion of the NIH full-length cDNA project: the Mammalian Gene Collection (MGC).</title>
        <authorList>
            <consortium name="The MGC Project Team"/>
        </authorList>
    </citation>
    <scope>NUCLEOTIDE SEQUENCE [LARGE SCALE MRNA] (ISOFORMS 1 AND 2)</scope>
    <source>
        <strain>C57BL/6J</strain>
        <tissue>Brain</tissue>
    </source>
</reference>
<reference key="2">
    <citation type="journal article" date="2003" name="DNA Res.">
        <title>Prediction of the coding sequences of mouse homologues of KIAA gene: III. The complete nucleotide sequences of 500 mouse KIAA-homologous cDNAs identified by screening of terminal sequences of cDNA clones randomly sampled from size-fractionated libraries.</title>
        <authorList>
            <person name="Okazaki N."/>
            <person name="Kikuno R."/>
            <person name="Ohara R."/>
            <person name="Inamoto S."/>
            <person name="Koseki H."/>
            <person name="Hiraoka S."/>
            <person name="Saga Y."/>
            <person name="Nagase T."/>
            <person name="Ohara O."/>
            <person name="Koga H."/>
        </authorList>
    </citation>
    <scope>NUCLEOTIDE SEQUENCE [LARGE SCALE MRNA] OF 1-643 (ISOFORM 1/2)</scope>
</reference>
<reference key="3">
    <citation type="journal article" date="2010" name="Cell">
        <title>A tissue-specific atlas of mouse protein phosphorylation and expression.</title>
        <authorList>
            <person name="Huttlin E.L."/>
            <person name="Jedrychowski M.P."/>
            <person name="Elias J.E."/>
            <person name="Goswami T."/>
            <person name="Rad R."/>
            <person name="Beausoleil S.A."/>
            <person name="Villen J."/>
            <person name="Haas W."/>
            <person name="Sowa M.E."/>
            <person name="Gygi S.P."/>
        </authorList>
    </citation>
    <scope>PHOSPHORYLATION [LARGE SCALE ANALYSIS] AT SER-313</scope>
    <scope>IDENTIFICATION BY MASS SPECTROMETRY [LARGE SCALE ANALYSIS]</scope>
    <source>
        <tissue>Kidney</tissue>
    </source>
</reference>
<reference key="4">
    <citation type="journal article" date="2013" name="Mol. Cell">
        <title>SIRT5-mediated lysine desuccinylation impacts diverse metabolic pathways.</title>
        <authorList>
            <person name="Park J."/>
            <person name="Chen Y."/>
            <person name="Tishkoff D.X."/>
            <person name="Peng C."/>
            <person name="Tan M."/>
            <person name="Dai L."/>
            <person name="Xie Z."/>
            <person name="Zhang Y."/>
            <person name="Zwaans B.M."/>
            <person name="Skinner M.E."/>
            <person name="Lombard D.B."/>
            <person name="Zhao Y."/>
        </authorList>
    </citation>
    <scope>ACETYLATION [LARGE SCALE ANALYSIS] AT LYS-175</scope>
    <scope>IDENTIFICATION BY MASS SPECTROMETRY [LARGE SCALE ANALYSIS]</scope>
    <source>
        <tissue>Embryonic fibroblast</tissue>
    </source>
</reference>
<comment type="function">
    <text>May be involved in transcriptional regulation.</text>
</comment>
<comment type="subcellular location">
    <subcellularLocation>
        <location evidence="5">Nucleus</location>
    </subcellularLocation>
</comment>
<comment type="alternative products">
    <event type="alternative splicing"/>
    <isoform>
        <id>Q6NXK2-1</id>
        <name>1</name>
        <sequence type="displayed"/>
    </isoform>
    <isoform>
        <id>Q6NXK2-2</id>
        <name>2</name>
        <sequence type="described" ref="VSP_027745"/>
    </isoform>
</comment>
<comment type="miscellaneous">
    <molecule>Isoform 2</molecule>
    <text evidence="5">May be produced at very low levels due to a premature stop codon in the mRNA, leading to nonsense-mediated mRNA decay.</text>
</comment>
<comment type="similarity">
    <text evidence="5">Belongs to the krueppel C2H2-type zinc-finger protein family.</text>
</comment>
<comment type="sequence caution" evidence="5">
    <conflict type="erroneous initiation">
        <sequence resource="EMBL-CDS" id="BAC98220"/>
    </conflict>
    <text>Extended N-terminus.</text>
</comment>
<keyword id="KW-0007">Acetylation</keyword>
<keyword id="KW-0025">Alternative splicing</keyword>
<keyword id="KW-0238">DNA-binding</keyword>
<keyword id="KW-1017">Isopeptide bond</keyword>
<keyword id="KW-0479">Metal-binding</keyword>
<keyword id="KW-0539">Nucleus</keyword>
<keyword id="KW-0597">Phosphoprotein</keyword>
<keyword id="KW-1185">Reference proteome</keyword>
<keyword id="KW-0677">Repeat</keyword>
<keyword id="KW-0804">Transcription</keyword>
<keyword id="KW-0805">Transcription regulation</keyword>
<keyword id="KW-0832">Ubl conjugation</keyword>
<keyword id="KW-0862">Zinc</keyword>
<keyword id="KW-0863">Zinc-finger</keyword>
<proteinExistence type="evidence at protein level"/>
<accession>Q6NXK2</accession>
<accession>Q504Z6</accession>
<accession>Q6ZPL1</accession>
<dbReference type="EMBL" id="BC067032">
    <property type="protein sequence ID" value="AAH67032.1"/>
    <property type="molecule type" value="mRNA"/>
</dbReference>
<dbReference type="EMBL" id="BC094671">
    <property type="protein sequence ID" value="AAH94671.1"/>
    <property type="molecule type" value="mRNA"/>
</dbReference>
<dbReference type="EMBL" id="AK129410">
    <property type="protein sequence ID" value="BAC98220.1"/>
    <property type="status" value="ALT_INIT"/>
    <property type="molecule type" value="mRNA"/>
</dbReference>
<dbReference type="CCDS" id="CCDS29307.1">
    <molecule id="Q6NXK2-1"/>
</dbReference>
<dbReference type="RefSeq" id="NP_997138.1">
    <molecule id="Q6NXK2-1"/>
    <property type="nucleotide sequence ID" value="NM_207255.2"/>
</dbReference>
<dbReference type="RefSeq" id="XP_011245259.1">
    <property type="nucleotide sequence ID" value="XM_011246957.1"/>
</dbReference>
<dbReference type="RefSeq" id="XP_017173418.1">
    <property type="nucleotide sequence ID" value="XM_017317929.1"/>
</dbReference>
<dbReference type="RefSeq" id="XP_017173419.1">
    <property type="nucleotide sequence ID" value="XM_017317930.1"/>
</dbReference>
<dbReference type="BioGRID" id="236687">
    <property type="interactions" value="2"/>
</dbReference>
<dbReference type="FunCoup" id="Q6NXK2">
    <property type="interactions" value="2013"/>
</dbReference>
<dbReference type="STRING" id="10090.ENSMUSP00000036582"/>
<dbReference type="GlyGen" id="Q6NXK2">
    <property type="glycosylation" value="6 sites, 1 O-linked glycan (5 sites)"/>
</dbReference>
<dbReference type="iPTMnet" id="Q6NXK2"/>
<dbReference type="PhosphoSitePlus" id="Q6NXK2"/>
<dbReference type="jPOST" id="Q6NXK2"/>
<dbReference type="PaxDb" id="10090-ENSMUSP00000036582"/>
<dbReference type="PeptideAtlas" id="Q6NXK2"/>
<dbReference type="ProteomicsDB" id="275294">
    <molecule id="Q6NXK2-1"/>
</dbReference>
<dbReference type="ProteomicsDB" id="275295">
    <molecule id="Q6NXK2-2"/>
</dbReference>
<dbReference type="Pumba" id="Q6NXK2"/>
<dbReference type="Antibodypedia" id="9795">
    <property type="antibodies" value="46 antibodies from 10 providers"/>
</dbReference>
<dbReference type="Ensembl" id="ENSMUST00000049016.12">
    <molecule id="Q6NXK2-1"/>
    <property type="protein sequence ID" value="ENSMUSP00000036582.5"/>
    <property type="gene ID" value="ENSMUSG00000042439.14"/>
</dbReference>
<dbReference type="Ensembl" id="ENSMUST00000169679.8">
    <molecule id="Q6NXK2-1"/>
    <property type="protein sequence ID" value="ENSMUSP00000129390.2"/>
    <property type="gene ID" value="ENSMUSG00000042439.14"/>
</dbReference>
<dbReference type="Ensembl" id="ENSMUST00000182478.8">
    <molecule id="Q6NXK2-2"/>
    <property type="protein sequence ID" value="ENSMUSP00000138315.2"/>
    <property type="gene ID" value="ENSMUSG00000042439.14"/>
</dbReference>
<dbReference type="GeneID" id="328977"/>
<dbReference type="KEGG" id="mmu:328977"/>
<dbReference type="UCSC" id="uc008ffc.2">
    <molecule id="Q6NXK2-1"/>
    <property type="organism name" value="mouse"/>
</dbReference>
<dbReference type="AGR" id="MGI:3036282"/>
<dbReference type="CTD" id="328977"/>
<dbReference type="MGI" id="MGI:3036282">
    <property type="gene designation" value="Zfp532"/>
</dbReference>
<dbReference type="VEuPathDB" id="HostDB:ENSMUSG00000042439"/>
<dbReference type="eggNOG" id="KOG1721">
    <property type="taxonomic scope" value="Eukaryota"/>
</dbReference>
<dbReference type="GeneTree" id="ENSGT00940000154437"/>
<dbReference type="HOGENOM" id="CLU_006283_0_0_1"/>
<dbReference type="InParanoid" id="Q6NXK2"/>
<dbReference type="OrthoDB" id="8856548at2759"/>
<dbReference type="PhylomeDB" id="Q6NXK2"/>
<dbReference type="TreeFam" id="TF329009"/>
<dbReference type="BioGRID-ORCS" id="328977">
    <property type="hits" value="1 hit in 61 CRISPR screens"/>
</dbReference>
<dbReference type="ChiTaRS" id="Zfp532">
    <property type="organism name" value="mouse"/>
</dbReference>
<dbReference type="PRO" id="PR:Q6NXK2"/>
<dbReference type="Proteomes" id="UP000000589">
    <property type="component" value="Chromosome 18"/>
</dbReference>
<dbReference type="RNAct" id="Q6NXK2">
    <property type="molecule type" value="protein"/>
</dbReference>
<dbReference type="Bgee" id="ENSMUSG00000042439">
    <property type="expression patterns" value="Expressed in cortical plate and 249 other cell types or tissues"/>
</dbReference>
<dbReference type="ExpressionAtlas" id="Q6NXK2">
    <property type="expression patterns" value="baseline and differential"/>
</dbReference>
<dbReference type="GO" id="GO:0005634">
    <property type="term" value="C:nucleus"/>
    <property type="evidence" value="ECO:0007669"/>
    <property type="project" value="UniProtKB-SubCell"/>
</dbReference>
<dbReference type="GO" id="GO:0003677">
    <property type="term" value="F:DNA binding"/>
    <property type="evidence" value="ECO:0007669"/>
    <property type="project" value="UniProtKB-KW"/>
</dbReference>
<dbReference type="GO" id="GO:0008270">
    <property type="term" value="F:zinc ion binding"/>
    <property type="evidence" value="ECO:0007669"/>
    <property type="project" value="UniProtKB-KW"/>
</dbReference>
<dbReference type="FunFam" id="3.30.160.60:FF:000446">
    <property type="entry name" value="Zinc finger protein"/>
    <property type="match status" value="1"/>
</dbReference>
<dbReference type="FunFam" id="3.30.160.60:FF:001446">
    <property type="entry name" value="Zinc finger protein 532"/>
    <property type="match status" value="1"/>
</dbReference>
<dbReference type="Gene3D" id="3.30.160.60">
    <property type="entry name" value="Classic Zinc Finger"/>
    <property type="match status" value="4"/>
</dbReference>
<dbReference type="InterPro" id="IPR045914">
    <property type="entry name" value="Zn532-like"/>
</dbReference>
<dbReference type="InterPro" id="IPR041697">
    <property type="entry name" value="Znf-C2H2_11"/>
</dbReference>
<dbReference type="InterPro" id="IPR036236">
    <property type="entry name" value="Znf_C2H2_sf"/>
</dbReference>
<dbReference type="InterPro" id="IPR013087">
    <property type="entry name" value="Znf_C2H2_type"/>
</dbReference>
<dbReference type="PANTHER" id="PTHR47222:SF3">
    <property type="entry name" value="ZINC FINGER PROTEIN 532"/>
    <property type="match status" value="1"/>
</dbReference>
<dbReference type="PANTHER" id="PTHR47222">
    <property type="entry name" value="ZINC FINGER PROTEIN 532-RELATED"/>
    <property type="match status" value="1"/>
</dbReference>
<dbReference type="Pfam" id="PF16622">
    <property type="entry name" value="zf-C2H2_11"/>
    <property type="match status" value="1"/>
</dbReference>
<dbReference type="Pfam" id="PF13912">
    <property type="entry name" value="zf-C2H2_6"/>
    <property type="match status" value="1"/>
</dbReference>
<dbReference type="Pfam" id="PF25412">
    <property type="entry name" value="zf-C2H2_ZNF592"/>
    <property type="match status" value="1"/>
</dbReference>
<dbReference type="SMART" id="SM00355">
    <property type="entry name" value="ZnF_C2H2"/>
    <property type="match status" value="8"/>
</dbReference>
<dbReference type="SUPFAM" id="SSF57667">
    <property type="entry name" value="beta-beta-alpha zinc fingers"/>
    <property type="match status" value="2"/>
</dbReference>
<dbReference type="PROSITE" id="PS00028">
    <property type="entry name" value="ZINC_FINGER_C2H2_1"/>
    <property type="match status" value="3"/>
</dbReference>
<dbReference type="PROSITE" id="PS50157">
    <property type="entry name" value="ZINC_FINGER_C2H2_2"/>
    <property type="match status" value="5"/>
</dbReference>
<organism>
    <name type="scientific">Mus musculus</name>
    <name type="common">Mouse</name>
    <dbReference type="NCBI Taxonomy" id="10090"/>
    <lineage>
        <taxon>Eukaryota</taxon>
        <taxon>Metazoa</taxon>
        <taxon>Chordata</taxon>
        <taxon>Craniata</taxon>
        <taxon>Vertebrata</taxon>
        <taxon>Euteleostomi</taxon>
        <taxon>Mammalia</taxon>
        <taxon>Eutheria</taxon>
        <taxon>Euarchontoglires</taxon>
        <taxon>Glires</taxon>
        <taxon>Rodentia</taxon>
        <taxon>Myomorpha</taxon>
        <taxon>Muroidea</taxon>
        <taxon>Muridae</taxon>
        <taxon>Murinae</taxon>
        <taxon>Mus</taxon>
        <taxon>Mus</taxon>
    </lineage>
</organism>